<protein>
    <recommendedName>
        <fullName evidence="1">Aspartate 1-decarboxylase</fullName>
        <ecNumber evidence="1">4.1.1.11</ecNumber>
    </recommendedName>
    <alternativeName>
        <fullName evidence="1">Aspartate alpha-decarboxylase</fullName>
    </alternativeName>
    <component>
        <recommendedName>
            <fullName evidence="1">Aspartate 1-decarboxylase beta chain</fullName>
        </recommendedName>
    </component>
    <component>
        <recommendedName>
            <fullName evidence="1">Aspartate 1-decarboxylase alpha chain</fullName>
        </recommendedName>
    </component>
</protein>
<reference key="1">
    <citation type="journal article" date="2000" name="Nature">
        <title>The genome sequence of the food-borne pathogen Campylobacter jejuni reveals hypervariable sequences.</title>
        <authorList>
            <person name="Parkhill J."/>
            <person name="Wren B.W."/>
            <person name="Mungall K.L."/>
            <person name="Ketley J.M."/>
            <person name="Churcher C.M."/>
            <person name="Basham D."/>
            <person name="Chillingworth T."/>
            <person name="Davies R.M."/>
            <person name="Feltwell T."/>
            <person name="Holroyd S."/>
            <person name="Jagels K."/>
            <person name="Karlyshev A.V."/>
            <person name="Moule S."/>
            <person name="Pallen M.J."/>
            <person name="Penn C.W."/>
            <person name="Quail M.A."/>
            <person name="Rajandream M.A."/>
            <person name="Rutherford K.M."/>
            <person name="van Vliet A.H.M."/>
            <person name="Whitehead S."/>
            <person name="Barrell B.G."/>
        </authorList>
    </citation>
    <scope>NUCLEOTIDE SEQUENCE [LARGE SCALE GENOMIC DNA]</scope>
    <source>
        <strain>ATCC 700819 / NCTC 11168</strain>
    </source>
</reference>
<keyword id="KW-0002">3D-structure</keyword>
<keyword id="KW-0068">Autocatalytic cleavage</keyword>
<keyword id="KW-0963">Cytoplasm</keyword>
<keyword id="KW-0210">Decarboxylase</keyword>
<keyword id="KW-0456">Lyase</keyword>
<keyword id="KW-0566">Pantothenate biosynthesis</keyword>
<keyword id="KW-0670">Pyruvate</keyword>
<keyword id="KW-1185">Reference proteome</keyword>
<keyword id="KW-0704">Schiff base</keyword>
<keyword id="KW-0865">Zymogen</keyword>
<feature type="chain" id="PRO_0000023053" description="Aspartate 1-decarboxylase beta chain" evidence="1">
    <location>
        <begin position="1"/>
        <end position="24"/>
    </location>
</feature>
<feature type="chain" id="PRO_0000023054" description="Aspartate 1-decarboxylase alpha chain" evidence="1">
    <location>
        <begin position="25"/>
        <end position="126"/>
    </location>
</feature>
<feature type="active site" description="Schiff-base intermediate with substrate; via pyruvic acid" evidence="1">
    <location>
        <position position="25"/>
    </location>
</feature>
<feature type="active site" description="Proton donor" evidence="1">
    <location>
        <position position="58"/>
    </location>
</feature>
<feature type="binding site" evidence="1">
    <location>
        <position position="57"/>
    </location>
    <ligand>
        <name>substrate</name>
    </ligand>
</feature>
<feature type="binding site" evidence="1">
    <location>
        <begin position="72"/>
        <end position="74"/>
    </location>
    <ligand>
        <name>substrate</name>
    </ligand>
</feature>
<feature type="modified residue" description="Pyruvic acid (Ser)" evidence="1">
    <location>
        <position position="25"/>
    </location>
</feature>
<feature type="strand" evidence="2">
    <location>
        <begin position="2"/>
        <end position="14"/>
    </location>
</feature>
<feature type="strand" evidence="2">
    <location>
        <begin position="17"/>
        <end position="19"/>
    </location>
</feature>
<feature type="strand" evidence="2">
    <location>
        <begin position="27"/>
        <end position="29"/>
    </location>
</feature>
<feature type="helix" evidence="2">
    <location>
        <begin position="30"/>
        <end position="36"/>
    </location>
</feature>
<feature type="strand" evidence="2">
    <location>
        <begin position="43"/>
        <end position="48"/>
    </location>
</feature>
<feature type="turn" evidence="2">
    <location>
        <begin position="49"/>
        <end position="51"/>
    </location>
</feature>
<feature type="strand" evidence="2">
    <location>
        <begin position="54"/>
        <end position="58"/>
    </location>
</feature>
<feature type="strand" evidence="2">
    <location>
        <begin position="60"/>
        <end position="64"/>
    </location>
</feature>
<feature type="strand" evidence="2">
    <location>
        <begin position="68"/>
        <end position="71"/>
    </location>
</feature>
<feature type="helix" evidence="2">
    <location>
        <begin position="72"/>
        <end position="77"/>
    </location>
</feature>
<feature type="strand" evidence="2">
    <location>
        <begin position="83"/>
        <end position="93"/>
    </location>
</feature>
<feature type="helix" evidence="2">
    <location>
        <begin position="94"/>
        <end position="99"/>
    </location>
</feature>
<feature type="strand" evidence="2">
    <location>
        <begin position="103"/>
        <end position="107"/>
    </location>
</feature>
<feature type="strand" evidence="2">
    <location>
        <begin position="113"/>
        <end position="118"/>
    </location>
</feature>
<feature type="helix" evidence="2">
    <location>
        <begin position="121"/>
        <end position="123"/>
    </location>
</feature>
<proteinExistence type="evidence at protein level"/>
<dbReference type="EC" id="4.1.1.11" evidence="1"/>
<dbReference type="EMBL" id="AL111168">
    <property type="protein sequence ID" value="CAL34447.1"/>
    <property type="molecule type" value="Genomic_DNA"/>
</dbReference>
<dbReference type="PIR" id="D81448">
    <property type="entry name" value="D81448"/>
</dbReference>
<dbReference type="RefSeq" id="WP_002857482.1">
    <property type="nucleotide sequence ID" value="NZ_SZUC01000004.1"/>
</dbReference>
<dbReference type="RefSeq" id="YP_002343734.1">
    <property type="nucleotide sequence ID" value="NC_002163.1"/>
</dbReference>
<dbReference type="PDB" id="3PLX">
    <property type="method" value="X-ray"/>
    <property type="resolution" value="1.75 A"/>
    <property type="chains" value="A=1-24, B=25-126"/>
</dbReference>
<dbReference type="PDBsum" id="3PLX"/>
<dbReference type="SMR" id="Q9PIK3"/>
<dbReference type="IntAct" id="Q9PIK3">
    <property type="interactions" value="80"/>
</dbReference>
<dbReference type="STRING" id="192222.Cj0296c"/>
<dbReference type="PaxDb" id="192222-Cj0296c"/>
<dbReference type="EnsemblBacteria" id="CAL34447">
    <property type="protein sequence ID" value="CAL34447"/>
    <property type="gene ID" value="Cj0296c"/>
</dbReference>
<dbReference type="GeneID" id="904620"/>
<dbReference type="KEGG" id="cje:Cj0296c"/>
<dbReference type="PATRIC" id="fig|192222.6.peg.288"/>
<dbReference type="eggNOG" id="COG0853">
    <property type="taxonomic scope" value="Bacteria"/>
</dbReference>
<dbReference type="HOGENOM" id="CLU_115305_2_0_7"/>
<dbReference type="OrthoDB" id="9803983at2"/>
<dbReference type="UniPathway" id="UPA00028">
    <property type="reaction ID" value="UER00002"/>
</dbReference>
<dbReference type="EvolutionaryTrace" id="Q9PIK3"/>
<dbReference type="Proteomes" id="UP000000799">
    <property type="component" value="Chromosome"/>
</dbReference>
<dbReference type="GO" id="GO:0005829">
    <property type="term" value="C:cytosol"/>
    <property type="evidence" value="ECO:0007669"/>
    <property type="project" value="TreeGrafter"/>
</dbReference>
<dbReference type="GO" id="GO:0004068">
    <property type="term" value="F:aspartate 1-decarboxylase activity"/>
    <property type="evidence" value="ECO:0007669"/>
    <property type="project" value="UniProtKB-UniRule"/>
</dbReference>
<dbReference type="GO" id="GO:0006523">
    <property type="term" value="P:alanine biosynthetic process"/>
    <property type="evidence" value="ECO:0007669"/>
    <property type="project" value="InterPro"/>
</dbReference>
<dbReference type="GO" id="GO:0015940">
    <property type="term" value="P:pantothenate biosynthetic process"/>
    <property type="evidence" value="ECO:0007669"/>
    <property type="project" value="UniProtKB-UniRule"/>
</dbReference>
<dbReference type="CDD" id="cd06919">
    <property type="entry name" value="Asp_decarbox"/>
    <property type="match status" value="1"/>
</dbReference>
<dbReference type="Gene3D" id="2.40.40.20">
    <property type="match status" value="1"/>
</dbReference>
<dbReference type="HAMAP" id="MF_00446">
    <property type="entry name" value="PanD"/>
    <property type="match status" value="1"/>
</dbReference>
<dbReference type="InterPro" id="IPR009010">
    <property type="entry name" value="Asp_de-COase-like_dom_sf"/>
</dbReference>
<dbReference type="InterPro" id="IPR003190">
    <property type="entry name" value="Asp_decarbox"/>
</dbReference>
<dbReference type="NCBIfam" id="TIGR00223">
    <property type="entry name" value="panD"/>
    <property type="match status" value="1"/>
</dbReference>
<dbReference type="PANTHER" id="PTHR21012">
    <property type="entry name" value="ASPARTATE 1-DECARBOXYLASE"/>
    <property type="match status" value="1"/>
</dbReference>
<dbReference type="PANTHER" id="PTHR21012:SF0">
    <property type="entry name" value="ASPARTATE 1-DECARBOXYLASE"/>
    <property type="match status" value="1"/>
</dbReference>
<dbReference type="Pfam" id="PF02261">
    <property type="entry name" value="Asp_decarbox"/>
    <property type="match status" value="1"/>
</dbReference>
<dbReference type="PIRSF" id="PIRSF006246">
    <property type="entry name" value="Asp_decarbox"/>
    <property type="match status" value="1"/>
</dbReference>
<dbReference type="SUPFAM" id="SSF50692">
    <property type="entry name" value="ADC-like"/>
    <property type="match status" value="1"/>
</dbReference>
<evidence type="ECO:0000255" key="1">
    <source>
        <dbReference type="HAMAP-Rule" id="MF_00446"/>
    </source>
</evidence>
<evidence type="ECO:0007829" key="2">
    <source>
        <dbReference type="PDB" id="3PLX"/>
    </source>
</evidence>
<organism>
    <name type="scientific">Campylobacter jejuni subsp. jejuni serotype O:2 (strain ATCC 700819 / NCTC 11168)</name>
    <dbReference type="NCBI Taxonomy" id="192222"/>
    <lineage>
        <taxon>Bacteria</taxon>
        <taxon>Pseudomonadati</taxon>
        <taxon>Campylobacterota</taxon>
        <taxon>Epsilonproteobacteria</taxon>
        <taxon>Campylobacterales</taxon>
        <taxon>Campylobacteraceae</taxon>
        <taxon>Campylobacter</taxon>
    </lineage>
</organism>
<gene>
    <name evidence="1" type="primary">panD</name>
    <name type="ordered locus">Cj0296c</name>
</gene>
<sequence>MNITLLKSKIHRASVTEARLDYIGSISIDEKLLQASGILEYEKVQVVNVNNGARFETYTIATQEEGVVCLNGAAARLAEVGDKVIIMSYADFNEEEAKTFKPKVVFVDENNTATKITNYEKHGAIF</sequence>
<comment type="function">
    <text evidence="1">Catalyzes the pyruvoyl-dependent decarboxylation of aspartate to produce beta-alanine.</text>
</comment>
<comment type="catalytic activity">
    <reaction evidence="1">
        <text>L-aspartate + H(+) = beta-alanine + CO2</text>
        <dbReference type="Rhea" id="RHEA:19497"/>
        <dbReference type="ChEBI" id="CHEBI:15378"/>
        <dbReference type="ChEBI" id="CHEBI:16526"/>
        <dbReference type="ChEBI" id="CHEBI:29991"/>
        <dbReference type="ChEBI" id="CHEBI:57966"/>
        <dbReference type="EC" id="4.1.1.11"/>
    </reaction>
</comment>
<comment type="cofactor">
    <cofactor evidence="1">
        <name>pyruvate</name>
        <dbReference type="ChEBI" id="CHEBI:15361"/>
    </cofactor>
    <text evidence="1">Binds 1 pyruvoyl group covalently per subunit.</text>
</comment>
<comment type="pathway">
    <text evidence="1">Cofactor biosynthesis; (R)-pantothenate biosynthesis; beta-alanine from L-aspartate: step 1/1.</text>
</comment>
<comment type="subunit">
    <text evidence="1">Heterooctamer of four alpha and four beta subunits.</text>
</comment>
<comment type="subcellular location">
    <subcellularLocation>
        <location evidence="1">Cytoplasm</location>
    </subcellularLocation>
</comment>
<comment type="PTM">
    <text evidence="1">Is synthesized initially as an inactive proenzyme, which is activated by self-cleavage at a specific serine bond to produce a beta-subunit with a hydroxyl group at its C-terminus and an alpha-subunit with a pyruvoyl group at its N-terminus.</text>
</comment>
<comment type="similarity">
    <text evidence="1">Belongs to the PanD family.</text>
</comment>
<name>PAND_CAMJE</name>
<accession>Q9PIK3</accession>
<accession>Q0PBL3</accession>